<comment type="function">
    <text evidence="2">Prevents cell to cell fusion by interacting with and directing the viral OPG040 protein on the host plasma membrane. The OPG185-OPG040 complex associates with components of the entry fusion complex (EFC) presumably to avoid superinfection and syncytium formation. Via its interaction with C3/VCP protein, protects the infected cell and probably also the extracellular enveloped virus from complement attack.</text>
</comment>
<comment type="subunit">
    <text evidence="2">Heterodimerizes with OPG040. The heterodimer OPG185-OPG040 interacts with components of the entry fusion complex OPG143 and OPG094. Heterodimer with C3/VPC protein; disulfide-linked.</text>
</comment>
<comment type="subcellular location">
    <subcellularLocation>
        <location evidence="2">Virion membrane</location>
        <topology evidence="2">Single-pass type I membrane protein</topology>
    </subcellularLocation>
    <subcellularLocation>
        <location evidence="2">Host membrane</location>
        <topology evidence="2">Single-pass type I membrane protein</topology>
    </subcellularLocation>
    <text evidence="2">Component of extracellular enveloped virus (EEV) but not intracellular mature virus (IMV). Component of the outermost membrane of EEV.</text>
</comment>
<comment type="induction">
    <text>Expressed in the early phase of the viral replicative cycle.</text>
</comment>
<comment type="PTM">
    <text evidence="2">Glycosylated; contains phosphate and sulfate-substituted glycans. O-glycosylation is required for hemagglutination and hemadsorption activities of infected cell membranes.</text>
</comment>
<comment type="similarity">
    <text evidence="6">Belongs to the orthopoxvirus OPG185 family.</text>
</comment>
<organism>
    <name type="scientific">Vaccinia virus (strain Copenhagen)</name>
    <name type="common">VACV</name>
    <dbReference type="NCBI Taxonomy" id="10249"/>
    <lineage>
        <taxon>Viruses</taxon>
        <taxon>Varidnaviria</taxon>
        <taxon>Bamfordvirae</taxon>
        <taxon>Nucleocytoviricota</taxon>
        <taxon>Pokkesviricetes</taxon>
        <taxon>Chitovirales</taxon>
        <taxon>Poxviridae</taxon>
        <taxon>Chordopoxvirinae</taxon>
        <taxon>Orthopoxvirus</taxon>
        <taxon>Vaccinia virus</taxon>
    </lineage>
</organism>
<accession>P20978</accession>
<proteinExistence type="evidence at transcript level"/>
<dbReference type="EMBL" id="M35027">
    <property type="protein sequence ID" value="AAA48191.1"/>
    <property type="molecule type" value="Genomic_DNA"/>
</dbReference>
<dbReference type="PIR" id="D42523">
    <property type="entry name" value="HNVZ4X"/>
</dbReference>
<dbReference type="SMR" id="P20978"/>
<dbReference type="GlyCosmos" id="P20978">
    <property type="glycosylation" value="5 sites, No reported glycans"/>
</dbReference>
<dbReference type="Proteomes" id="UP000008269">
    <property type="component" value="Segment"/>
</dbReference>
<dbReference type="GO" id="GO:0033644">
    <property type="term" value="C:host cell membrane"/>
    <property type="evidence" value="ECO:0007669"/>
    <property type="project" value="UniProtKB-SubCell"/>
</dbReference>
<dbReference type="GO" id="GO:0016020">
    <property type="term" value="C:membrane"/>
    <property type="evidence" value="ECO:0007669"/>
    <property type="project" value="UniProtKB-KW"/>
</dbReference>
<dbReference type="GO" id="GO:0019031">
    <property type="term" value="C:viral envelope"/>
    <property type="evidence" value="ECO:0007669"/>
    <property type="project" value="UniProtKB-KW"/>
</dbReference>
<dbReference type="GO" id="GO:0055036">
    <property type="term" value="C:virion membrane"/>
    <property type="evidence" value="ECO:0007669"/>
    <property type="project" value="UniProtKB-SubCell"/>
</dbReference>
<dbReference type="Gene3D" id="2.60.40.10">
    <property type="entry name" value="Immunoglobulins"/>
    <property type="match status" value="1"/>
</dbReference>
<dbReference type="InterPro" id="IPR007110">
    <property type="entry name" value="Ig-like_dom"/>
</dbReference>
<dbReference type="InterPro" id="IPR036179">
    <property type="entry name" value="Ig-like_dom_sf"/>
</dbReference>
<dbReference type="InterPro" id="IPR013783">
    <property type="entry name" value="Ig-like_fold"/>
</dbReference>
<dbReference type="InterPro" id="IPR003599">
    <property type="entry name" value="Ig_sub"/>
</dbReference>
<dbReference type="InterPro" id="IPR013106">
    <property type="entry name" value="Ig_V-set"/>
</dbReference>
<dbReference type="Pfam" id="PF07686">
    <property type="entry name" value="V-set"/>
    <property type="match status" value="1"/>
</dbReference>
<dbReference type="SMART" id="SM00409">
    <property type="entry name" value="IG"/>
    <property type="match status" value="1"/>
</dbReference>
<dbReference type="SUPFAM" id="SSF48726">
    <property type="entry name" value="Immunoglobulin"/>
    <property type="match status" value="1"/>
</dbReference>
<dbReference type="PROSITE" id="PS50835">
    <property type="entry name" value="IG_LIKE"/>
    <property type="match status" value="1"/>
</dbReference>
<evidence type="ECO:0000250" key="1"/>
<evidence type="ECO:0000250" key="2">
    <source>
        <dbReference type="UniProtKB" id="Q01218"/>
    </source>
</evidence>
<evidence type="ECO:0000255" key="3"/>
<evidence type="ECO:0000255" key="4">
    <source>
        <dbReference type="PROSITE-ProRule" id="PRU00114"/>
    </source>
</evidence>
<evidence type="ECO:0000256" key="5">
    <source>
        <dbReference type="SAM" id="MobiDB-lite"/>
    </source>
</evidence>
<evidence type="ECO:0000305" key="6"/>
<sequence>MTRLPILLLLISLVYATPFPQTSKKIGDDATLSCNRNNTNDYVVMSAWYKEPNSIILLAAKSDVLYFDNYTKDKISYDSPYDDLVTTITIKSLTARDAGTYVCAFFMTSPTNDTDKVDYEEYSTELIVNTDSESTIDIILSGSTHSPETSSEKPDYIDNSNCSSVFEIATPEPITDNVEDHTDTVTYTSDSINTVSATSGESTTDETPEPITDKEEDHTVTDTVSYTTVSTSSGIVTTKSTTDDADLYDTYNDNDTVPSTTVGSSTTSISNYKTKDFVEIFGITALIILSAVAIFCITYYICNKRSRKYKTENKV</sequence>
<organismHost>
    <name type="scientific">Homo sapiens</name>
    <name type="common">Human</name>
    <dbReference type="NCBI Taxonomy" id="9606"/>
</organismHost>
<name>HEMA_VACCC</name>
<keyword id="KW-1015">Disulfide bond</keyword>
<keyword id="KW-0244">Early protein</keyword>
<keyword id="KW-0325">Glycoprotein</keyword>
<keyword id="KW-0348">Hemagglutinin</keyword>
<keyword id="KW-1043">Host membrane</keyword>
<keyword id="KW-0393">Immunoglobulin domain</keyword>
<keyword id="KW-0426">Late protein</keyword>
<keyword id="KW-0472">Membrane</keyword>
<keyword id="KW-1185">Reference proteome</keyword>
<keyword id="KW-0732">Signal</keyword>
<keyword id="KW-0812">Transmembrane</keyword>
<keyword id="KW-1133">Transmembrane helix</keyword>
<keyword id="KW-0261">Viral envelope protein</keyword>
<keyword id="KW-0946">Virion</keyword>
<feature type="signal peptide" evidence="1">
    <location>
        <begin position="1"/>
        <end position="16"/>
    </location>
</feature>
<feature type="chain" id="PRO_0000040565" description="Protein OPG185">
    <location>
        <begin position="17"/>
        <end position="315"/>
    </location>
</feature>
<feature type="topological domain" description="Virion surface" evidence="3">
    <location>
        <begin position="17"/>
        <end position="279"/>
    </location>
</feature>
<feature type="transmembrane region" description="Helical" evidence="3">
    <location>
        <begin position="280"/>
        <end position="303"/>
    </location>
</feature>
<feature type="topological domain" description="Intravirion" evidence="3">
    <location>
        <begin position="304"/>
        <end position="315"/>
    </location>
</feature>
<feature type="domain" description="Ig-like V-type">
    <location>
        <begin position="17"/>
        <end position="121"/>
    </location>
</feature>
<feature type="region of interest" description="Disordered" evidence="5">
    <location>
        <begin position="194"/>
        <end position="213"/>
    </location>
</feature>
<feature type="glycosylation site" description="N-linked (GlcNAc...) asparagine; by host" evidence="3">
    <location>
        <position position="37"/>
    </location>
</feature>
<feature type="glycosylation site" description="N-linked (GlcNAc...) asparagine; by host" evidence="3">
    <location>
        <position position="69"/>
    </location>
</feature>
<feature type="glycosylation site" description="N-linked (GlcNAc...) asparagine; by host" evidence="3">
    <location>
        <position position="112"/>
    </location>
</feature>
<feature type="glycosylation site" description="N-linked (GlcNAc...) asparagine; by host" evidence="3">
    <location>
        <position position="161"/>
    </location>
</feature>
<feature type="glycosylation site" description="N-linked (GlcNAc...) asparagine; by host" evidence="3">
    <location>
        <position position="254"/>
    </location>
</feature>
<feature type="disulfide bond" evidence="4">
    <location>
        <begin position="34"/>
        <end position="103"/>
    </location>
</feature>
<feature type="disulfide bond" description="Interchain (with C-20 in complement control protein C3)" evidence="4">
    <location>
        <position position="162"/>
    </location>
</feature>
<reference key="1">
    <citation type="journal article" date="1990" name="Virology">
        <title>The complete DNA sequence of vaccinia virus.</title>
        <authorList>
            <person name="Goebel S.J."/>
            <person name="Johnson G.P."/>
            <person name="Perkus M.E."/>
            <person name="Davis S.W."/>
            <person name="Winslow J.P."/>
            <person name="Paoletti E."/>
        </authorList>
    </citation>
    <scope>NUCLEOTIDE SEQUENCE [LARGE SCALE GENOMIC DNA]</scope>
</reference>
<reference key="2">
    <citation type="journal article" date="1990" name="Virology">
        <title>Appendix to 'The complete DNA sequence of vaccinia virus'.</title>
        <authorList>
            <person name="Goebel S.J."/>
            <person name="Johnson G.P."/>
            <person name="Perkus M.E."/>
            <person name="Davis S.W."/>
            <person name="Winslow J.P."/>
            <person name="Paoletti E."/>
        </authorList>
    </citation>
    <scope>NUCLEOTIDE SEQUENCE [LARGE SCALE GENOMIC DNA]</scope>
</reference>
<protein>
    <recommendedName>
        <fullName>Protein OPG185</fullName>
    </recommendedName>
    <alternativeName>
        <fullName>Hemagglutinin</fullName>
    </alternativeName>
</protein>
<gene>
    <name type="primary">OPG185</name>
    <name type="synonym">HA</name>
    <name type="ORF">A56R</name>
</gene>